<gene>
    <name evidence="1" type="primary">caiA</name>
    <name type="ordered locus">SeAg_B0080</name>
</gene>
<name>CAIA_SALA4</name>
<evidence type="ECO:0000255" key="1">
    <source>
        <dbReference type="HAMAP-Rule" id="MF_01052"/>
    </source>
</evidence>
<sequence length="380" mass="42481">MDFNLNDEQELFVAGIRELMASENWEAYFAECDRDSVYPERFVKALADMGIDSLLIPEEHGGLEAGFVTVAAVWMELGRLGAPTYVLYQLPGGFNTFLREGTQEQIDKIMAFRGTGKQMWNSAITEPGAGSDVGSLKTTYTRKNGKVYLNGSKCFITSSAYTPYIVVMARDGASPDKPVYTEWFVDMSKAGIKVNKLEKLGLRMDSCCEITFDDVELDEKDMFGREGNGFNRVKEEFDHERFLVALTNYGTAMCAFEDAARYANQRVQFGEAIGRFQLIQEKFAHMAIKLNSMKNMLLEAAWKADNGTITSGDAAMCKYFCANAAFEVVDTAMQVLGGVGIAGNHRITRFWRDLRVDRVSGGSDEMQILTLGRAVLKQYR</sequence>
<reference key="1">
    <citation type="journal article" date="2011" name="J. Bacteriol.">
        <title>Comparative genomics of 28 Salmonella enterica isolates: evidence for CRISPR-mediated adaptive sublineage evolution.</title>
        <authorList>
            <person name="Fricke W.F."/>
            <person name="Mammel M.K."/>
            <person name="McDermott P.F."/>
            <person name="Tartera C."/>
            <person name="White D.G."/>
            <person name="Leclerc J.E."/>
            <person name="Ravel J."/>
            <person name="Cebula T.A."/>
        </authorList>
    </citation>
    <scope>NUCLEOTIDE SEQUENCE [LARGE SCALE GENOMIC DNA]</scope>
    <source>
        <strain>SL483</strain>
    </source>
</reference>
<feature type="chain" id="PRO_1000136278" description="Crotonobetainyl-CoA reductase">
    <location>
        <begin position="1"/>
        <end position="380"/>
    </location>
</feature>
<keyword id="KW-0963">Cytoplasm</keyword>
<keyword id="KW-0274">FAD</keyword>
<keyword id="KW-0285">Flavoprotein</keyword>
<keyword id="KW-0560">Oxidoreductase</keyword>
<dbReference type="EC" id="1.3.8.13" evidence="1"/>
<dbReference type="EMBL" id="CP001138">
    <property type="protein sequence ID" value="ACH52757.1"/>
    <property type="molecule type" value="Genomic_DNA"/>
</dbReference>
<dbReference type="RefSeq" id="WP_000347134.1">
    <property type="nucleotide sequence ID" value="NC_011149.1"/>
</dbReference>
<dbReference type="SMR" id="B5F752"/>
<dbReference type="GeneID" id="44979088"/>
<dbReference type="KEGG" id="sea:SeAg_B0080"/>
<dbReference type="HOGENOM" id="CLU_018204_0_2_6"/>
<dbReference type="UniPathway" id="UPA00117"/>
<dbReference type="Proteomes" id="UP000008819">
    <property type="component" value="Chromosome"/>
</dbReference>
<dbReference type="GO" id="GO:0005737">
    <property type="term" value="C:cytoplasm"/>
    <property type="evidence" value="ECO:0007669"/>
    <property type="project" value="UniProtKB-SubCell"/>
</dbReference>
<dbReference type="GO" id="GO:0003995">
    <property type="term" value="F:acyl-CoA dehydrogenase activity"/>
    <property type="evidence" value="ECO:0007669"/>
    <property type="project" value="InterPro"/>
</dbReference>
<dbReference type="GO" id="GO:0050660">
    <property type="term" value="F:flavin adenine dinucleotide binding"/>
    <property type="evidence" value="ECO:0007669"/>
    <property type="project" value="InterPro"/>
</dbReference>
<dbReference type="GO" id="GO:0009437">
    <property type="term" value="P:carnitine metabolic process"/>
    <property type="evidence" value="ECO:0007669"/>
    <property type="project" value="UniProtKB-UniRule"/>
</dbReference>
<dbReference type="CDD" id="cd00567">
    <property type="entry name" value="ACAD"/>
    <property type="match status" value="1"/>
</dbReference>
<dbReference type="FunFam" id="1.20.140.10:FF:000001">
    <property type="entry name" value="Acyl-CoA dehydrogenase"/>
    <property type="match status" value="1"/>
</dbReference>
<dbReference type="FunFam" id="2.40.110.10:FF:000002">
    <property type="entry name" value="Acyl-CoA dehydrogenase fadE12"/>
    <property type="match status" value="1"/>
</dbReference>
<dbReference type="FunFam" id="1.10.540.10:FF:000005">
    <property type="entry name" value="Crotonobetainyl-CoA reductase"/>
    <property type="match status" value="1"/>
</dbReference>
<dbReference type="Gene3D" id="1.10.540.10">
    <property type="entry name" value="Acyl-CoA dehydrogenase/oxidase, N-terminal domain"/>
    <property type="match status" value="1"/>
</dbReference>
<dbReference type="Gene3D" id="2.40.110.10">
    <property type="entry name" value="Butyryl-CoA Dehydrogenase, subunit A, domain 2"/>
    <property type="match status" value="1"/>
</dbReference>
<dbReference type="Gene3D" id="1.20.140.10">
    <property type="entry name" value="Butyryl-CoA Dehydrogenase, subunit A, domain 3"/>
    <property type="match status" value="1"/>
</dbReference>
<dbReference type="HAMAP" id="MF_01052">
    <property type="entry name" value="CaiA"/>
    <property type="match status" value="1"/>
</dbReference>
<dbReference type="InterPro" id="IPR006089">
    <property type="entry name" value="Acyl-CoA_DH_CS"/>
</dbReference>
<dbReference type="InterPro" id="IPR006091">
    <property type="entry name" value="Acyl-CoA_Oxase/DH_mid-dom"/>
</dbReference>
<dbReference type="InterPro" id="IPR046373">
    <property type="entry name" value="Acyl-CoA_Oxase/DH_mid-dom_sf"/>
</dbReference>
<dbReference type="InterPro" id="IPR036250">
    <property type="entry name" value="AcylCo_DH-like_C"/>
</dbReference>
<dbReference type="InterPro" id="IPR009075">
    <property type="entry name" value="AcylCo_DH/oxidase_C"/>
</dbReference>
<dbReference type="InterPro" id="IPR013786">
    <property type="entry name" value="AcylCoA_DH/ox_N"/>
</dbReference>
<dbReference type="InterPro" id="IPR037069">
    <property type="entry name" value="AcylCoA_DH/ox_N_sf"/>
</dbReference>
<dbReference type="InterPro" id="IPR009100">
    <property type="entry name" value="AcylCoA_DH/oxidase_NM_dom_sf"/>
</dbReference>
<dbReference type="InterPro" id="IPR023450">
    <property type="entry name" value="CaiA"/>
</dbReference>
<dbReference type="NCBIfam" id="NF002885">
    <property type="entry name" value="PRK03354.1"/>
    <property type="match status" value="1"/>
</dbReference>
<dbReference type="PANTHER" id="PTHR43884">
    <property type="entry name" value="ACYL-COA DEHYDROGENASE"/>
    <property type="match status" value="1"/>
</dbReference>
<dbReference type="PANTHER" id="PTHR43884:SF12">
    <property type="entry name" value="ISOVALERYL-COA DEHYDROGENASE, MITOCHONDRIAL-RELATED"/>
    <property type="match status" value="1"/>
</dbReference>
<dbReference type="Pfam" id="PF00441">
    <property type="entry name" value="Acyl-CoA_dh_1"/>
    <property type="match status" value="1"/>
</dbReference>
<dbReference type="Pfam" id="PF02770">
    <property type="entry name" value="Acyl-CoA_dh_M"/>
    <property type="match status" value="1"/>
</dbReference>
<dbReference type="Pfam" id="PF02771">
    <property type="entry name" value="Acyl-CoA_dh_N"/>
    <property type="match status" value="1"/>
</dbReference>
<dbReference type="PIRSF" id="PIRSF016578">
    <property type="entry name" value="HsaA"/>
    <property type="match status" value="1"/>
</dbReference>
<dbReference type="SUPFAM" id="SSF47203">
    <property type="entry name" value="Acyl-CoA dehydrogenase C-terminal domain-like"/>
    <property type="match status" value="1"/>
</dbReference>
<dbReference type="SUPFAM" id="SSF56645">
    <property type="entry name" value="Acyl-CoA dehydrogenase NM domain-like"/>
    <property type="match status" value="1"/>
</dbReference>
<dbReference type="PROSITE" id="PS00072">
    <property type="entry name" value="ACYL_COA_DH_1"/>
    <property type="match status" value="1"/>
</dbReference>
<dbReference type="PROSITE" id="PS00073">
    <property type="entry name" value="ACYL_COA_DH_2"/>
    <property type="match status" value="1"/>
</dbReference>
<comment type="function">
    <text evidence="1">Catalyzes the reduction of crotonobetainyl-CoA to gamma-butyrobetainyl-CoA.</text>
</comment>
<comment type="catalytic activity">
    <reaction evidence="1">
        <text>4-(trimethylamino)butanoyl-CoA + oxidized [electron-transfer flavoprotein] + H(+) = crotonobetainyl-CoA + reduced [electron-transfer flavoprotein]</text>
        <dbReference type="Rhea" id="RHEA:51584"/>
        <dbReference type="Rhea" id="RHEA-COMP:10685"/>
        <dbReference type="Rhea" id="RHEA-COMP:10686"/>
        <dbReference type="ChEBI" id="CHEBI:15378"/>
        <dbReference type="ChEBI" id="CHEBI:57692"/>
        <dbReference type="ChEBI" id="CHEBI:58307"/>
        <dbReference type="ChEBI" id="CHEBI:60933"/>
        <dbReference type="ChEBI" id="CHEBI:61513"/>
        <dbReference type="EC" id="1.3.8.13"/>
    </reaction>
</comment>
<comment type="cofactor">
    <cofactor evidence="1">
        <name>FAD</name>
        <dbReference type="ChEBI" id="CHEBI:57692"/>
    </cofactor>
</comment>
<comment type="pathway">
    <text evidence="1">Amine and polyamine metabolism; carnitine metabolism.</text>
</comment>
<comment type="subunit">
    <text evidence="1">Homotetramer.</text>
</comment>
<comment type="subcellular location">
    <subcellularLocation>
        <location evidence="1">Cytoplasm</location>
    </subcellularLocation>
</comment>
<comment type="similarity">
    <text evidence="1">Belongs to the acyl-CoA dehydrogenase family.</text>
</comment>
<organism>
    <name type="scientific">Salmonella agona (strain SL483)</name>
    <dbReference type="NCBI Taxonomy" id="454166"/>
    <lineage>
        <taxon>Bacteria</taxon>
        <taxon>Pseudomonadati</taxon>
        <taxon>Pseudomonadota</taxon>
        <taxon>Gammaproteobacteria</taxon>
        <taxon>Enterobacterales</taxon>
        <taxon>Enterobacteriaceae</taxon>
        <taxon>Salmonella</taxon>
    </lineage>
</organism>
<protein>
    <recommendedName>
        <fullName evidence="1">Crotonobetainyl-CoA reductase</fullName>
        <ecNumber evidence="1">1.3.8.13</ecNumber>
    </recommendedName>
    <alternativeName>
        <fullName evidence="1">Crotonobetainyl-CoA dehydrogenase</fullName>
    </alternativeName>
</protein>
<accession>B5F752</accession>
<proteinExistence type="inferred from homology"/>